<name>RL33_ACIF5</name>
<gene>
    <name evidence="1" type="primary">rpmG</name>
    <name type="ordered locus">Lferr_2294</name>
</gene>
<organism>
    <name type="scientific">Acidithiobacillus ferrooxidans (strain ATCC 53993 / BNL-5-31)</name>
    <name type="common">Leptospirillum ferrooxidans (ATCC 53993)</name>
    <dbReference type="NCBI Taxonomy" id="380394"/>
    <lineage>
        <taxon>Bacteria</taxon>
        <taxon>Pseudomonadati</taxon>
        <taxon>Pseudomonadota</taxon>
        <taxon>Acidithiobacillia</taxon>
        <taxon>Acidithiobacillales</taxon>
        <taxon>Acidithiobacillaceae</taxon>
        <taxon>Acidithiobacillus</taxon>
    </lineage>
</organism>
<proteinExistence type="inferred from homology"/>
<dbReference type="EMBL" id="CP001132">
    <property type="protein sequence ID" value="ACH84495.1"/>
    <property type="molecule type" value="Genomic_DNA"/>
</dbReference>
<dbReference type="RefSeq" id="WP_012537325.1">
    <property type="nucleotide sequence ID" value="NC_011206.1"/>
</dbReference>
<dbReference type="SMR" id="B5ENA6"/>
<dbReference type="GeneID" id="65281713"/>
<dbReference type="KEGG" id="afe:Lferr_2294"/>
<dbReference type="eggNOG" id="COG0267">
    <property type="taxonomic scope" value="Bacteria"/>
</dbReference>
<dbReference type="HOGENOM" id="CLU_190949_1_1_6"/>
<dbReference type="GO" id="GO:0022625">
    <property type="term" value="C:cytosolic large ribosomal subunit"/>
    <property type="evidence" value="ECO:0007669"/>
    <property type="project" value="TreeGrafter"/>
</dbReference>
<dbReference type="GO" id="GO:0003735">
    <property type="term" value="F:structural constituent of ribosome"/>
    <property type="evidence" value="ECO:0007669"/>
    <property type="project" value="InterPro"/>
</dbReference>
<dbReference type="GO" id="GO:0006412">
    <property type="term" value="P:translation"/>
    <property type="evidence" value="ECO:0007669"/>
    <property type="project" value="UniProtKB-UniRule"/>
</dbReference>
<dbReference type="FunFam" id="2.20.28.120:FF:000001">
    <property type="entry name" value="50S ribosomal protein L33"/>
    <property type="match status" value="1"/>
</dbReference>
<dbReference type="Gene3D" id="2.20.28.120">
    <property type="entry name" value="Ribosomal protein L33"/>
    <property type="match status" value="1"/>
</dbReference>
<dbReference type="HAMAP" id="MF_00294">
    <property type="entry name" value="Ribosomal_bL33"/>
    <property type="match status" value="1"/>
</dbReference>
<dbReference type="InterPro" id="IPR001705">
    <property type="entry name" value="Ribosomal_bL33"/>
</dbReference>
<dbReference type="InterPro" id="IPR018264">
    <property type="entry name" value="Ribosomal_bL33_CS"/>
</dbReference>
<dbReference type="InterPro" id="IPR038584">
    <property type="entry name" value="Ribosomal_bL33_sf"/>
</dbReference>
<dbReference type="InterPro" id="IPR011332">
    <property type="entry name" value="Ribosomal_zn-bd"/>
</dbReference>
<dbReference type="NCBIfam" id="NF001764">
    <property type="entry name" value="PRK00504.1"/>
    <property type="match status" value="1"/>
</dbReference>
<dbReference type="NCBIfam" id="NF001860">
    <property type="entry name" value="PRK00595.1"/>
    <property type="match status" value="1"/>
</dbReference>
<dbReference type="NCBIfam" id="TIGR01023">
    <property type="entry name" value="rpmG_bact"/>
    <property type="match status" value="1"/>
</dbReference>
<dbReference type="PANTHER" id="PTHR15238">
    <property type="entry name" value="54S RIBOSOMAL PROTEIN L39, MITOCHONDRIAL"/>
    <property type="match status" value="1"/>
</dbReference>
<dbReference type="PANTHER" id="PTHR15238:SF1">
    <property type="entry name" value="LARGE RIBOSOMAL SUBUNIT PROTEIN BL33M"/>
    <property type="match status" value="1"/>
</dbReference>
<dbReference type="Pfam" id="PF00471">
    <property type="entry name" value="Ribosomal_L33"/>
    <property type="match status" value="1"/>
</dbReference>
<dbReference type="SUPFAM" id="SSF57829">
    <property type="entry name" value="Zn-binding ribosomal proteins"/>
    <property type="match status" value="1"/>
</dbReference>
<dbReference type="PROSITE" id="PS00582">
    <property type="entry name" value="RIBOSOMAL_L33"/>
    <property type="match status" value="1"/>
</dbReference>
<comment type="similarity">
    <text evidence="1">Belongs to the bacterial ribosomal protein bL33 family.</text>
</comment>
<feature type="chain" id="PRO_0000356359" description="Large ribosomal subunit protein bL33">
    <location>
        <begin position="1"/>
        <end position="51"/>
    </location>
</feature>
<evidence type="ECO:0000255" key="1">
    <source>
        <dbReference type="HAMAP-Rule" id="MF_00294"/>
    </source>
</evidence>
<evidence type="ECO:0000305" key="2"/>
<sequence>MRDKIKLVSTAGTGHFYTTTKNKKTTPDKLEMKKFDPKVRKHVMYREDKIK</sequence>
<reference key="1">
    <citation type="submission" date="2008-08" db="EMBL/GenBank/DDBJ databases">
        <title>Complete sequence of Acidithiobacillus ferrooxidans ATCC 53993.</title>
        <authorList>
            <person name="Lucas S."/>
            <person name="Copeland A."/>
            <person name="Lapidus A."/>
            <person name="Glavina del Rio T."/>
            <person name="Dalin E."/>
            <person name="Tice H."/>
            <person name="Bruce D."/>
            <person name="Goodwin L."/>
            <person name="Pitluck S."/>
            <person name="Sims D."/>
            <person name="Brettin T."/>
            <person name="Detter J.C."/>
            <person name="Han C."/>
            <person name="Kuske C.R."/>
            <person name="Larimer F."/>
            <person name="Land M."/>
            <person name="Hauser L."/>
            <person name="Kyrpides N."/>
            <person name="Lykidis A."/>
            <person name="Borole A.P."/>
        </authorList>
    </citation>
    <scope>NUCLEOTIDE SEQUENCE [LARGE SCALE GENOMIC DNA]</scope>
    <source>
        <strain>ATCC 53993 / BNL-5-31</strain>
    </source>
</reference>
<accession>B5ENA6</accession>
<protein>
    <recommendedName>
        <fullName evidence="1">Large ribosomal subunit protein bL33</fullName>
    </recommendedName>
    <alternativeName>
        <fullName evidence="2">50S ribosomal protein L33</fullName>
    </alternativeName>
</protein>
<keyword id="KW-0687">Ribonucleoprotein</keyword>
<keyword id="KW-0689">Ribosomal protein</keyword>